<gene>
    <name evidence="1" type="primary">psd</name>
    <name type="ordered locus">HI_0160</name>
</gene>
<proteinExistence type="inferred from homology"/>
<evidence type="ECO:0000255" key="1">
    <source>
        <dbReference type="HAMAP-Rule" id="MF_00662"/>
    </source>
</evidence>
<comment type="function">
    <text evidence="1">Catalyzes the formation of phosphatidylethanolamine (PtdEtn) from phosphatidylserine (PtdSer).</text>
</comment>
<comment type="catalytic activity">
    <reaction evidence="1">
        <text>a 1,2-diacyl-sn-glycero-3-phospho-L-serine + H(+) = a 1,2-diacyl-sn-glycero-3-phosphoethanolamine + CO2</text>
        <dbReference type="Rhea" id="RHEA:20828"/>
        <dbReference type="ChEBI" id="CHEBI:15378"/>
        <dbReference type="ChEBI" id="CHEBI:16526"/>
        <dbReference type="ChEBI" id="CHEBI:57262"/>
        <dbReference type="ChEBI" id="CHEBI:64612"/>
        <dbReference type="EC" id="4.1.1.65"/>
    </reaction>
</comment>
<comment type="cofactor">
    <cofactor evidence="1">
        <name>pyruvate</name>
        <dbReference type="ChEBI" id="CHEBI:15361"/>
    </cofactor>
    <text evidence="1">Binds 1 pyruvoyl group covalently per subunit.</text>
</comment>
<comment type="pathway">
    <text evidence="1">Phospholipid metabolism; phosphatidylethanolamine biosynthesis; phosphatidylethanolamine from CDP-diacylglycerol: step 2/2.</text>
</comment>
<comment type="subunit">
    <text evidence="1">Heterodimer of a large membrane-associated beta subunit and a small pyruvoyl-containing alpha subunit.</text>
</comment>
<comment type="subcellular location">
    <subcellularLocation>
        <location evidence="1">Cell membrane</location>
        <topology evidence="1">Peripheral membrane protein</topology>
    </subcellularLocation>
</comment>
<comment type="PTM">
    <text evidence="1">Is synthesized initially as an inactive proenzyme. Formation of the active enzyme involves a self-maturation process in which the active site pyruvoyl group is generated from an internal serine residue via an autocatalytic post-translational modification. Two non-identical subunits are generated from the proenzyme in this reaction, and the pyruvate is formed at the N-terminus of the alpha chain, which is derived from the carboxyl end of the proenzyme. The autoendoproteolytic cleavage occurs by a canonical serine protease mechanism, in which the side chain hydroxyl group of the serine supplies its oxygen atom to form the C-terminus of the beta chain, while the remainder of the serine residue undergoes an oxidative deamination to produce ammonia and the pyruvoyl prosthetic group on the alpha chain. During this reaction, the Ser that is part of the protease active site of the proenzyme becomes the pyruvoyl prosthetic group, which constitutes an essential element of the active site of the mature decarboxylase.</text>
</comment>
<comment type="similarity">
    <text evidence="1">Belongs to the phosphatidylserine decarboxylase family. PSD-B subfamily. Prokaryotic type I sub-subfamily.</text>
</comment>
<dbReference type="EC" id="4.1.1.65" evidence="1"/>
<dbReference type="EMBL" id="U20229">
    <property type="protein sequence ID" value="AAA62138.1"/>
    <property type="molecule type" value="Genomic_DNA"/>
</dbReference>
<dbReference type="EMBL" id="L42023">
    <property type="protein sequence ID" value="AAC21829.1"/>
    <property type="molecule type" value="Genomic_DNA"/>
</dbReference>
<dbReference type="PIR" id="I64051">
    <property type="entry name" value="I64051"/>
</dbReference>
<dbReference type="RefSeq" id="NP_438330.1">
    <property type="nucleotide sequence ID" value="NC_000907.1"/>
</dbReference>
<dbReference type="SMR" id="P43789"/>
<dbReference type="STRING" id="71421.HI_0160"/>
<dbReference type="EnsemblBacteria" id="AAC21829">
    <property type="protein sequence ID" value="AAC21829"/>
    <property type="gene ID" value="HI_0160"/>
</dbReference>
<dbReference type="KEGG" id="hin:HI_0160"/>
<dbReference type="PATRIC" id="fig|71421.8.peg.166"/>
<dbReference type="eggNOG" id="COG0688">
    <property type="taxonomic scope" value="Bacteria"/>
</dbReference>
<dbReference type="HOGENOM" id="CLU_029061_4_1_6"/>
<dbReference type="OrthoDB" id="9802030at2"/>
<dbReference type="PhylomeDB" id="P43789"/>
<dbReference type="BioCyc" id="HINF71421:G1GJ1-172-MONOMER"/>
<dbReference type="UniPathway" id="UPA00558">
    <property type="reaction ID" value="UER00616"/>
</dbReference>
<dbReference type="Proteomes" id="UP000000579">
    <property type="component" value="Chromosome"/>
</dbReference>
<dbReference type="GO" id="GO:0005886">
    <property type="term" value="C:plasma membrane"/>
    <property type="evidence" value="ECO:0007669"/>
    <property type="project" value="UniProtKB-SubCell"/>
</dbReference>
<dbReference type="GO" id="GO:0004609">
    <property type="term" value="F:phosphatidylserine decarboxylase activity"/>
    <property type="evidence" value="ECO:0000318"/>
    <property type="project" value="GO_Central"/>
</dbReference>
<dbReference type="GO" id="GO:0006646">
    <property type="term" value="P:phosphatidylethanolamine biosynthetic process"/>
    <property type="evidence" value="ECO:0000318"/>
    <property type="project" value="GO_Central"/>
</dbReference>
<dbReference type="HAMAP" id="MF_00662">
    <property type="entry name" value="PS_decarb_PSD_B_type1"/>
    <property type="match status" value="1"/>
</dbReference>
<dbReference type="InterPro" id="IPR003817">
    <property type="entry name" value="PS_Dcarbxylase"/>
</dbReference>
<dbReference type="InterPro" id="IPR033177">
    <property type="entry name" value="PSD-B"/>
</dbReference>
<dbReference type="InterPro" id="IPR033178">
    <property type="entry name" value="PSD_type1_pro"/>
</dbReference>
<dbReference type="NCBIfam" id="TIGR00163">
    <property type="entry name" value="PS_decarb"/>
    <property type="match status" value="1"/>
</dbReference>
<dbReference type="PANTHER" id="PTHR10067">
    <property type="entry name" value="PHOSPHATIDYLSERINE DECARBOXYLASE"/>
    <property type="match status" value="1"/>
</dbReference>
<dbReference type="PANTHER" id="PTHR10067:SF6">
    <property type="entry name" value="PHOSPHATIDYLSERINE DECARBOXYLASE PROENZYME, MITOCHONDRIAL"/>
    <property type="match status" value="1"/>
</dbReference>
<dbReference type="Pfam" id="PF02666">
    <property type="entry name" value="PS_Dcarbxylase"/>
    <property type="match status" value="1"/>
</dbReference>
<protein>
    <recommendedName>
        <fullName evidence="1">Phosphatidylserine decarboxylase proenzyme</fullName>
        <ecNumber evidence="1">4.1.1.65</ecNumber>
    </recommendedName>
    <component>
        <recommendedName>
            <fullName evidence="1">Phosphatidylserine decarboxylase alpha chain</fullName>
        </recommendedName>
    </component>
    <component>
        <recommendedName>
            <fullName evidence="1">Phosphatidylserine decarboxylase beta chain</fullName>
        </recommendedName>
    </component>
</protein>
<name>PSD_HAEIN</name>
<organism>
    <name type="scientific">Haemophilus influenzae (strain ATCC 51907 / DSM 11121 / KW20 / Rd)</name>
    <dbReference type="NCBI Taxonomy" id="71421"/>
    <lineage>
        <taxon>Bacteria</taxon>
        <taxon>Pseudomonadati</taxon>
        <taxon>Pseudomonadota</taxon>
        <taxon>Gammaproteobacteria</taxon>
        <taxon>Pasteurellales</taxon>
        <taxon>Pasteurellaceae</taxon>
        <taxon>Haemophilus</taxon>
    </lineage>
</organism>
<sequence>MMTSNSYWQRLKVAFQYVMPQIYLTQIAGWFAKQKWGKITHFVIKAFAKKYNIDMSIAQKEQFSDYASFNEFFIRPLKENARPINQNPTALCLPADGRISECGHIDDNLLLQAKGHFFSLEDLLAEDKELVETFKNGEFVTTYLSPRDYHRVHMPCDATLRKMIYVPGDLFSVNPFLAQHVPNLFARNERVICVFDTEFGTMVQILVGATITASIGTTWAGVINPPRHNEVKTWTYEGESAVKLLKGQEMGWFQLGSTVINLFQANQVRLADHLSVNEPVRMGEILAYKK</sequence>
<accession>P43789</accession>
<keyword id="KW-1003">Cell membrane</keyword>
<keyword id="KW-0210">Decarboxylase</keyword>
<keyword id="KW-0444">Lipid biosynthesis</keyword>
<keyword id="KW-0443">Lipid metabolism</keyword>
<keyword id="KW-0456">Lyase</keyword>
<keyword id="KW-0472">Membrane</keyword>
<keyword id="KW-0594">Phospholipid biosynthesis</keyword>
<keyword id="KW-1208">Phospholipid metabolism</keyword>
<keyword id="KW-0670">Pyruvate</keyword>
<keyword id="KW-1185">Reference proteome</keyword>
<keyword id="KW-0865">Zymogen</keyword>
<feature type="chain" id="PRO_0000029663" description="Phosphatidylserine decarboxylase beta chain" evidence="1">
    <location>
        <begin position="1"/>
        <end position="256"/>
    </location>
</feature>
<feature type="chain" id="PRO_0000029664" description="Phosphatidylserine decarboxylase alpha chain" evidence="1">
    <location>
        <begin position="257"/>
        <end position="290"/>
    </location>
</feature>
<feature type="active site" description="Charge relay system; for autoendoproteolytic cleavage activity" evidence="1">
    <location>
        <position position="96"/>
    </location>
</feature>
<feature type="active site" description="Charge relay system; for autoendoproteolytic cleavage activity" evidence="1">
    <location>
        <position position="153"/>
    </location>
</feature>
<feature type="active site" description="Charge relay system; for autoendoproteolytic cleavage activity" evidence="1">
    <location>
        <position position="257"/>
    </location>
</feature>
<feature type="active site" description="Schiff-base intermediate with substrate; via pyruvic acid; for decarboxylase activity" evidence="1">
    <location>
        <position position="257"/>
    </location>
</feature>
<feature type="site" description="Cleavage (non-hydrolytic); by autocatalysis" evidence="1">
    <location>
        <begin position="256"/>
        <end position="257"/>
    </location>
</feature>
<feature type="modified residue" description="Pyruvic acid (Ser); by autocatalysis" evidence="1">
    <location>
        <position position="257"/>
    </location>
</feature>
<reference key="1">
    <citation type="submission" date="1995-01" db="EMBL/GenBank/DDBJ databases">
        <authorList>
            <person name="Barcak G.J."/>
            <person name="Heimer S.R."/>
        </authorList>
    </citation>
    <scope>NUCLEOTIDE SEQUENCE [GENOMIC DNA]</scope>
    <source>
        <strain>ATCC 51907 / DSM 11121 / KW20 / Rd</strain>
    </source>
</reference>
<reference key="2">
    <citation type="journal article" date="1995" name="Science">
        <title>Whole-genome random sequencing and assembly of Haemophilus influenzae Rd.</title>
        <authorList>
            <person name="Fleischmann R.D."/>
            <person name="Adams M.D."/>
            <person name="White O."/>
            <person name="Clayton R.A."/>
            <person name="Kirkness E.F."/>
            <person name="Kerlavage A.R."/>
            <person name="Bult C.J."/>
            <person name="Tomb J.-F."/>
            <person name="Dougherty B.A."/>
            <person name="Merrick J.M."/>
            <person name="McKenney K."/>
            <person name="Sutton G.G."/>
            <person name="FitzHugh W."/>
            <person name="Fields C.A."/>
            <person name="Gocayne J.D."/>
            <person name="Scott J.D."/>
            <person name="Shirley R."/>
            <person name="Liu L.-I."/>
            <person name="Glodek A."/>
            <person name="Kelley J.M."/>
            <person name="Weidman J.F."/>
            <person name="Phillips C.A."/>
            <person name="Spriggs T."/>
            <person name="Hedblom E."/>
            <person name="Cotton M.D."/>
            <person name="Utterback T.R."/>
            <person name="Hanna M.C."/>
            <person name="Nguyen D.T."/>
            <person name="Saudek D.M."/>
            <person name="Brandon R.C."/>
            <person name="Fine L.D."/>
            <person name="Fritchman J.L."/>
            <person name="Fuhrmann J.L."/>
            <person name="Geoghagen N.S.M."/>
            <person name="Gnehm C.L."/>
            <person name="McDonald L.A."/>
            <person name="Small K.V."/>
            <person name="Fraser C.M."/>
            <person name="Smith H.O."/>
            <person name="Venter J.C."/>
        </authorList>
    </citation>
    <scope>NUCLEOTIDE SEQUENCE [LARGE SCALE GENOMIC DNA]</scope>
    <source>
        <strain>ATCC 51907 / DSM 11121 / KW20 / Rd</strain>
    </source>
</reference>